<reference key="1">
    <citation type="journal article" date="1998" name="Science">
        <title>Genome sequence of the nematode C. elegans: a platform for investigating biology.</title>
        <authorList>
            <consortium name="The C. elegans sequencing consortium"/>
        </authorList>
    </citation>
    <scope>NUCLEOTIDE SEQUENCE [LARGE SCALE GENOMIC DNA]</scope>
    <source>
        <strain>Bristol N2</strain>
    </source>
</reference>
<reference key="2">
    <citation type="journal article" date="2004" name="Mol. Biochem. Parasitol.">
        <title>MSP domain proteins show enhanced expression in male germ line cells.</title>
        <authorList>
            <person name="Tarr D.E.K."/>
            <person name="Scott A.L."/>
        </authorList>
    </citation>
    <scope>TISSUE SPECIFICITY</scope>
</reference>
<dbReference type="EMBL" id="FO080454">
    <property type="protein sequence ID" value="CCD63839.1"/>
    <property type="molecule type" value="Genomic_DNA"/>
</dbReference>
<dbReference type="EMBL" id="FO081037">
    <property type="protein sequence ID" value="CCD68682.1"/>
    <property type="molecule type" value="Genomic_DNA"/>
</dbReference>
<dbReference type="PIR" id="T29168">
    <property type="entry name" value="T29168"/>
</dbReference>
<dbReference type="RefSeq" id="NP_500697.1">
    <property type="nucleotide sequence ID" value="NM_068296.7"/>
</dbReference>
<dbReference type="RefSeq" id="NP_500699.1">
    <property type="nucleotide sequence ID" value="NM_068298.5"/>
</dbReference>
<dbReference type="SMR" id="Q23058"/>
<dbReference type="BioGRID" id="42390">
    <property type="interactions" value="1"/>
</dbReference>
<dbReference type="BioGRID" id="42392">
    <property type="interactions" value="2"/>
</dbReference>
<dbReference type="FunCoup" id="Q23058">
    <property type="interactions" value="2"/>
</dbReference>
<dbReference type="STRING" id="6239.E03H12.10.1"/>
<dbReference type="PaxDb" id="6239-E03H12.10"/>
<dbReference type="PeptideAtlas" id="Q23058"/>
<dbReference type="EnsemblMetazoa" id="E03H12.10.1">
    <property type="protein sequence ID" value="E03H12.10.1"/>
    <property type="gene ID" value="WBGene00006038"/>
</dbReference>
<dbReference type="EnsemblMetazoa" id="T28H11.6.1">
    <property type="protein sequence ID" value="T28H11.6.1"/>
    <property type="gene ID" value="WBGene00006040"/>
</dbReference>
<dbReference type="GeneID" id="177264"/>
<dbReference type="GeneID" id="177266"/>
<dbReference type="KEGG" id="cel:CELE_E03H12.10"/>
<dbReference type="KEGG" id="cel:CELE_T28H11.6"/>
<dbReference type="UCSC" id="E03H12.10">
    <property type="organism name" value="c. elegans"/>
</dbReference>
<dbReference type="AGR" id="WB:WBGene00006038"/>
<dbReference type="AGR" id="WB:WBGene00006040"/>
<dbReference type="CTD" id="177264"/>
<dbReference type="CTD" id="177266"/>
<dbReference type="WormBase" id="E03H12.10">
    <property type="protein sequence ID" value="CE09149"/>
    <property type="gene ID" value="WBGene00006038"/>
    <property type="gene designation" value="ssp-9"/>
</dbReference>
<dbReference type="WormBase" id="T28H11.6">
    <property type="protein sequence ID" value="CE09149"/>
    <property type="gene ID" value="WBGene00006040"/>
    <property type="gene designation" value="ssp-11"/>
</dbReference>
<dbReference type="eggNOG" id="ENOG502SQPZ">
    <property type="taxonomic scope" value="Eukaryota"/>
</dbReference>
<dbReference type="GeneTree" id="ENSGT00970000195880"/>
<dbReference type="HOGENOM" id="CLU_147608_1_0_1"/>
<dbReference type="InParanoid" id="Q23058"/>
<dbReference type="OMA" id="LVIQWAP"/>
<dbReference type="OrthoDB" id="264603at2759"/>
<dbReference type="PhylomeDB" id="Q23058"/>
<dbReference type="PRO" id="PR:Q23058"/>
<dbReference type="Proteomes" id="UP000001940">
    <property type="component" value="Chromosome IV"/>
</dbReference>
<dbReference type="Bgee" id="WBGene00006038">
    <property type="expression patterns" value="Expressed in adult organism and 1 other cell type or tissue"/>
</dbReference>
<dbReference type="FunFam" id="2.60.40.10:FF:002024">
    <property type="entry name" value="Sperm-specific class P protein 19"/>
    <property type="match status" value="1"/>
</dbReference>
<dbReference type="Gene3D" id="2.60.40.10">
    <property type="entry name" value="Immunoglobulins"/>
    <property type="match status" value="1"/>
</dbReference>
<dbReference type="InterPro" id="IPR013783">
    <property type="entry name" value="Ig-like_fold"/>
</dbReference>
<dbReference type="InterPro" id="IPR000535">
    <property type="entry name" value="MSP_dom"/>
</dbReference>
<dbReference type="InterPro" id="IPR008962">
    <property type="entry name" value="PapD-like_sf"/>
</dbReference>
<dbReference type="InterPro" id="IPR051774">
    <property type="entry name" value="Sperm-specific_class_P"/>
</dbReference>
<dbReference type="PANTHER" id="PTHR22947">
    <property type="entry name" value="MAJOR SPERM PROTEIN"/>
    <property type="match status" value="1"/>
</dbReference>
<dbReference type="PANTHER" id="PTHR22947:SF7">
    <property type="entry name" value="MSP DOMAIN-CONTAINING PROTEIN-RELATED"/>
    <property type="match status" value="1"/>
</dbReference>
<dbReference type="Pfam" id="PF00635">
    <property type="entry name" value="Motile_Sperm"/>
    <property type="match status" value="1"/>
</dbReference>
<dbReference type="SUPFAM" id="SSF49354">
    <property type="entry name" value="PapD-like"/>
    <property type="match status" value="1"/>
</dbReference>
<dbReference type="PROSITE" id="PS50202">
    <property type="entry name" value="MSP"/>
    <property type="match status" value="1"/>
</dbReference>
<gene>
    <name type="primary">ssp-9</name>
    <name type="ORF">E03H12.10</name>
</gene>
<gene>
    <name type="primary">ssp-11</name>
    <name type="ORF">T28H11.6</name>
</gene>
<organism>
    <name type="scientific">Caenorhabditis elegans</name>
    <dbReference type="NCBI Taxonomy" id="6239"/>
    <lineage>
        <taxon>Eukaryota</taxon>
        <taxon>Metazoa</taxon>
        <taxon>Ecdysozoa</taxon>
        <taxon>Nematoda</taxon>
        <taxon>Chromadorea</taxon>
        <taxon>Rhabditida</taxon>
        <taxon>Rhabditina</taxon>
        <taxon>Rhabditomorpha</taxon>
        <taxon>Rhabditoidea</taxon>
        <taxon>Rhabditidae</taxon>
        <taxon>Peloderinae</taxon>
        <taxon>Caenorhabditis</taxon>
    </lineage>
</organism>
<accession>Q23058</accession>
<accession>O02550</accession>
<keyword id="KW-1185">Reference proteome</keyword>
<evidence type="ECO:0000255" key="1">
    <source>
        <dbReference type="PROSITE-ProRule" id="PRU00132"/>
    </source>
</evidence>
<evidence type="ECO:0000269" key="2">
    <source>
    </source>
</evidence>
<sequence>MSLTADPPACTVPAAGGSSTHKLVNGGAEKIIFKIKSSNNNEYRIAPVFGFVDPAGSKDVVITRTAGAPKEDKLVIHFAPAPADATDAQAAFAAVTPAGTVTIPMSATA</sequence>
<name>SSP9_CAEEL</name>
<comment type="tissue specificity">
    <text evidence="2">Expressed at higher level in testis.</text>
</comment>
<protein>
    <recommendedName>
        <fullName>Sperm-specific class P protein 9/11</fullName>
    </recommendedName>
</protein>
<feature type="chain" id="PRO_0000213447" description="Sperm-specific class P protein 9/11">
    <location>
        <begin position="1"/>
        <end position="109"/>
    </location>
</feature>
<feature type="domain" description="MSP" evidence="1">
    <location>
        <begin position="2"/>
        <end position="109"/>
    </location>
</feature>
<proteinExistence type="evidence at transcript level"/>